<accession>B5XK94</accession>
<evidence type="ECO:0000255" key="1">
    <source>
        <dbReference type="HAMAP-Rule" id="MF_00023"/>
    </source>
</evidence>
<evidence type="ECO:0000256" key="2">
    <source>
        <dbReference type="SAM" id="MobiDB-lite"/>
    </source>
</evidence>
<proteinExistence type="inferred from homology"/>
<reference key="1">
    <citation type="journal article" date="2008" name="J. Bacteriol.">
        <title>Genome sequence of a nephritogenic and highly transformable M49 strain of Streptococcus pyogenes.</title>
        <authorList>
            <person name="McShan W.M."/>
            <person name="Ferretti J.J."/>
            <person name="Karasawa T."/>
            <person name="Suvorov A.N."/>
            <person name="Lin S."/>
            <person name="Qin B."/>
            <person name="Jia H."/>
            <person name="Kenton S."/>
            <person name="Najar F."/>
            <person name="Wu H."/>
            <person name="Scott J."/>
            <person name="Roe B.A."/>
            <person name="Savic D.J."/>
        </authorList>
    </citation>
    <scope>NUCLEOTIDE SEQUENCE [LARGE SCALE GENOMIC DNA]</scope>
    <source>
        <strain>NZ131</strain>
    </source>
</reference>
<gene>
    <name evidence="1" type="primary">smpB</name>
    <name type="ordered locus">Spy49_0423</name>
</gene>
<feature type="chain" id="PRO_1000090194" description="SsrA-binding protein">
    <location>
        <begin position="1"/>
        <end position="155"/>
    </location>
</feature>
<feature type="region of interest" description="Disordered" evidence="2">
    <location>
        <begin position="135"/>
        <end position="155"/>
    </location>
</feature>
<feature type="compositionally biased region" description="Basic and acidic residues" evidence="2">
    <location>
        <begin position="135"/>
        <end position="147"/>
    </location>
</feature>
<sequence length="155" mass="17730">MAKGEGHILAQNKKARHDYHIVETVEAGIVLTGTEIKSVRAARIQLKDGFAQIKNGEAWLVNVHIAPFEQGNIWNADPERTRKLLLKKREITHLANELKGSGMTLVPLKVYLKDGFAKVLIGLAKGKHEYDKRETIKRRDQERDIKKQMKHYNAR</sequence>
<protein>
    <recommendedName>
        <fullName evidence="1">SsrA-binding protein</fullName>
    </recommendedName>
    <alternativeName>
        <fullName evidence="1">Small protein B</fullName>
    </alternativeName>
</protein>
<comment type="function">
    <text evidence="1">Required for rescue of stalled ribosomes mediated by trans-translation. Binds to transfer-messenger RNA (tmRNA), required for stable association of tmRNA with ribosomes. tmRNA and SmpB together mimic tRNA shape, replacing the anticodon stem-loop with SmpB. tmRNA is encoded by the ssrA gene; the 2 termini fold to resemble tRNA(Ala) and it encodes a 'tag peptide', a short internal open reading frame. During trans-translation Ala-aminoacylated tmRNA acts like a tRNA, entering the A-site of stalled ribosomes, displacing the stalled mRNA. The ribosome then switches to translate the ORF on the tmRNA; the nascent peptide is terminated with the 'tag peptide' encoded by the tmRNA and targeted for degradation. The ribosome is freed to recommence translation, which seems to be the essential function of trans-translation.</text>
</comment>
<comment type="subcellular location">
    <subcellularLocation>
        <location evidence="1">Cytoplasm</location>
    </subcellularLocation>
    <text evidence="1">The tmRNA-SmpB complex associates with stalled 70S ribosomes.</text>
</comment>
<comment type="similarity">
    <text evidence="1">Belongs to the SmpB family.</text>
</comment>
<dbReference type="EMBL" id="CP000829">
    <property type="protein sequence ID" value="ACI60756.1"/>
    <property type="molecule type" value="Genomic_DNA"/>
</dbReference>
<dbReference type="SMR" id="B5XK94"/>
<dbReference type="KEGG" id="soz:Spy49_0423"/>
<dbReference type="HOGENOM" id="CLU_108953_0_0_9"/>
<dbReference type="Proteomes" id="UP000001039">
    <property type="component" value="Chromosome"/>
</dbReference>
<dbReference type="GO" id="GO:0005829">
    <property type="term" value="C:cytosol"/>
    <property type="evidence" value="ECO:0007669"/>
    <property type="project" value="TreeGrafter"/>
</dbReference>
<dbReference type="GO" id="GO:0003723">
    <property type="term" value="F:RNA binding"/>
    <property type="evidence" value="ECO:0007669"/>
    <property type="project" value="UniProtKB-UniRule"/>
</dbReference>
<dbReference type="GO" id="GO:0070929">
    <property type="term" value="P:trans-translation"/>
    <property type="evidence" value="ECO:0007669"/>
    <property type="project" value="UniProtKB-UniRule"/>
</dbReference>
<dbReference type="CDD" id="cd09294">
    <property type="entry name" value="SmpB"/>
    <property type="match status" value="1"/>
</dbReference>
<dbReference type="Gene3D" id="2.40.280.10">
    <property type="match status" value="1"/>
</dbReference>
<dbReference type="HAMAP" id="MF_00023">
    <property type="entry name" value="SmpB"/>
    <property type="match status" value="1"/>
</dbReference>
<dbReference type="InterPro" id="IPR023620">
    <property type="entry name" value="SmpB"/>
</dbReference>
<dbReference type="InterPro" id="IPR000037">
    <property type="entry name" value="SsrA-bd_prot"/>
</dbReference>
<dbReference type="InterPro" id="IPR020081">
    <property type="entry name" value="SsrA-bd_prot_CS"/>
</dbReference>
<dbReference type="NCBIfam" id="NF003843">
    <property type="entry name" value="PRK05422.1"/>
    <property type="match status" value="1"/>
</dbReference>
<dbReference type="NCBIfam" id="TIGR00086">
    <property type="entry name" value="smpB"/>
    <property type="match status" value="1"/>
</dbReference>
<dbReference type="PANTHER" id="PTHR30308:SF2">
    <property type="entry name" value="SSRA-BINDING PROTEIN"/>
    <property type="match status" value="1"/>
</dbReference>
<dbReference type="PANTHER" id="PTHR30308">
    <property type="entry name" value="TMRNA-BINDING COMPONENT OF TRANS-TRANSLATION TAGGING COMPLEX"/>
    <property type="match status" value="1"/>
</dbReference>
<dbReference type="Pfam" id="PF01668">
    <property type="entry name" value="SmpB"/>
    <property type="match status" value="1"/>
</dbReference>
<dbReference type="SUPFAM" id="SSF74982">
    <property type="entry name" value="Small protein B (SmpB)"/>
    <property type="match status" value="1"/>
</dbReference>
<dbReference type="PROSITE" id="PS01317">
    <property type="entry name" value="SSRP"/>
    <property type="match status" value="1"/>
</dbReference>
<keyword id="KW-0963">Cytoplasm</keyword>
<keyword id="KW-0694">RNA-binding</keyword>
<name>SSRP_STRPZ</name>
<organism>
    <name type="scientific">Streptococcus pyogenes serotype M49 (strain NZ131)</name>
    <dbReference type="NCBI Taxonomy" id="471876"/>
    <lineage>
        <taxon>Bacteria</taxon>
        <taxon>Bacillati</taxon>
        <taxon>Bacillota</taxon>
        <taxon>Bacilli</taxon>
        <taxon>Lactobacillales</taxon>
        <taxon>Streptococcaceae</taxon>
        <taxon>Streptococcus</taxon>
    </lineage>
</organism>